<evidence type="ECO:0000255" key="1">
    <source>
        <dbReference type="HAMAP-Rule" id="MF_00602"/>
    </source>
</evidence>
<name>MCSB_CALS4</name>
<reference key="1">
    <citation type="journal article" date="2002" name="Genome Res.">
        <title>A complete sequence of the T. tengcongensis genome.</title>
        <authorList>
            <person name="Bao Q."/>
            <person name="Tian Y."/>
            <person name="Li W."/>
            <person name="Xu Z."/>
            <person name="Xuan Z."/>
            <person name="Hu S."/>
            <person name="Dong W."/>
            <person name="Yang J."/>
            <person name="Chen Y."/>
            <person name="Xue Y."/>
            <person name="Xu Y."/>
            <person name="Lai X."/>
            <person name="Huang L."/>
            <person name="Dong X."/>
            <person name="Ma Y."/>
            <person name="Ling L."/>
            <person name="Tan H."/>
            <person name="Chen R."/>
            <person name="Wang J."/>
            <person name="Yu J."/>
            <person name="Yang H."/>
        </authorList>
    </citation>
    <scope>NUCLEOTIDE SEQUENCE [LARGE SCALE GENOMIC DNA]</scope>
    <source>
        <strain>DSM 15242 / JCM 11007 / NBRC 100824 / MB4</strain>
    </source>
</reference>
<feature type="chain" id="PRO_0000212039" description="Protein-arginine kinase">
    <location>
        <begin position="1"/>
        <end position="337"/>
    </location>
</feature>
<feature type="domain" description="Phosphagen kinase C-terminal" evidence="1">
    <location>
        <begin position="8"/>
        <end position="239"/>
    </location>
</feature>
<feature type="short sequence motif" description="RDXXRA motif of the pArg binding pocket involved in allosteric regulation" evidence="1">
    <location>
        <begin position="321"/>
        <end position="326"/>
    </location>
</feature>
<feature type="binding site" evidence="1">
    <location>
        <begin position="11"/>
        <end position="15"/>
    </location>
    <ligand>
        <name>ATP</name>
        <dbReference type="ChEBI" id="CHEBI:30616"/>
    </ligand>
</feature>
<feature type="binding site" evidence="1">
    <location>
        <position position="76"/>
    </location>
    <ligand>
        <name>ATP</name>
        <dbReference type="ChEBI" id="CHEBI:30616"/>
    </ligand>
</feature>
<feature type="binding site" evidence="1">
    <location>
        <position position="110"/>
    </location>
    <ligand>
        <name>ATP</name>
        <dbReference type="ChEBI" id="CHEBI:30616"/>
    </ligand>
</feature>
<feature type="binding site" evidence="1">
    <location>
        <begin position="161"/>
        <end position="165"/>
    </location>
    <ligand>
        <name>ATP</name>
        <dbReference type="ChEBI" id="CHEBI:30616"/>
    </ligand>
</feature>
<feature type="binding site" evidence="1">
    <location>
        <begin position="192"/>
        <end position="197"/>
    </location>
    <ligand>
        <name>ATP</name>
        <dbReference type="ChEBI" id="CHEBI:30616"/>
    </ligand>
</feature>
<dbReference type="EC" id="2.7.14.1" evidence="1"/>
<dbReference type="EMBL" id="AE008691">
    <property type="protein sequence ID" value="AAM25469.1"/>
    <property type="molecule type" value="Genomic_DNA"/>
</dbReference>
<dbReference type="RefSeq" id="WP_011026371.1">
    <property type="nucleotide sequence ID" value="NZ_JANUCV010000001.1"/>
</dbReference>
<dbReference type="SMR" id="Q8R7S0"/>
<dbReference type="STRING" id="273068.TTE2328"/>
<dbReference type="KEGG" id="tte:TTE2328"/>
<dbReference type="eggNOG" id="COG3869">
    <property type="taxonomic scope" value="Bacteria"/>
</dbReference>
<dbReference type="HOGENOM" id="CLU_066591_1_0_9"/>
<dbReference type="OrthoDB" id="9791353at2"/>
<dbReference type="Proteomes" id="UP000000555">
    <property type="component" value="Chromosome"/>
</dbReference>
<dbReference type="GO" id="GO:0005615">
    <property type="term" value="C:extracellular space"/>
    <property type="evidence" value="ECO:0007669"/>
    <property type="project" value="TreeGrafter"/>
</dbReference>
<dbReference type="GO" id="GO:0005524">
    <property type="term" value="F:ATP binding"/>
    <property type="evidence" value="ECO:0007669"/>
    <property type="project" value="UniProtKB-KW"/>
</dbReference>
<dbReference type="GO" id="GO:0004111">
    <property type="term" value="F:creatine kinase activity"/>
    <property type="evidence" value="ECO:0007669"/>
    <property type="project" value="InterPro"/>
</dbReference>
<dbReference type="GO" id="GO:0004672">
    <property type="term" value="F:protein kinase activity"/>
    <property type="evidence" value="ECO:0007669"/>
    <property type="project" value="UniProtKB-UniRule"/>
</dbReference>
<dbReference type="GO" id="GO:0046314">
    <property type="term" value="P:phosphocreatine biosynthetic process"/>
    <property type="evidence" value="ECO:0007669"/>
    <property type="project" value="InterPro"/>
</dbReference>
<dbReference type="CDD" id="cd07930">
    <property type="entry name" value="bacterial_phosphagen_kinase"/>
    <property type="match status" value="1"/>
</dbReference>
<dbReference type="FunFam" id="3.30.590.10:FF:000007">
    <property type="entry name" value="Protein-arginine kinase"/>
    <property type="match status" value="1"/>
</dbReference>
<dbReference type="Gene3D" id="3.30.590.10">
    <property type="entry name" value="Glutamine synthetase/guanido kinase, catalytic domain"/>
    <property type="match status" value="1"/>
</dbReference>
<dbReference type="HAMAP" id="MF_00602">
    <property type="entry name" value="Prot_Arg_kinase"/>
    <property type="match status" value="1"/>
</dbReference>
<dbReference type="InterPro" id="IPR023660">
    <property type="entry name" value="Arg_Kinase"/>
</dbReference>
<dbReference type="InterPro" id="IPR000749">
    <property type="entry name" value="ATP-guanido_PTrfase"/>
</dbReference>
<dbReference type="InterPro" id="IPR022415">
    <property type="entry name" value="ATP-guanido_PTrfase_AS"/>
</dbReference>
<dbReference type="InterPro" id="IPR022414">
    <property type="entry name" value="ATP-guanido_PTrfase_cat"/>
</dbReference>
<dbReference type="InterPro" id="IPR014746">
    <property type="entry name" value="Gln_synth/guanido_kin_cat_dom"/>
</dbReference>
<dbReference type="NCBIfam" id="NF002194">
    <property type="entry name" value="PRK01059.1-4"/>
    <property type="match status" value="1"/>
</dbReference>
<dbReference type="PANTHER" id="PTHR11547:SF38">
    <property type="entry name" value="ARGININE KINASE 1-RELATED"/>
    <property type="match status" value="1"/>
</dbReference>
<dbReference type="PANTHER" id="PTHR11547">
    <property type="entry name" value="ARGININE OR CREATINE KINASE"/>
    <property type="match status" value="1"/>
</dbReference>
<dbReference type="Pfam" id="PF00217">
    <property type="entry name" value="ATP-gua_Ptrans"/>
    <property type="match status" value="1"/>
</dbReference>
<dbReference type="SUPFAM" id="SSF55931">
    <property type="entry name" value="Glutamine synthetase/guanido kinase"/>
    <property type="match status" value="1"/>
</dbReference>
<dbReference type="PROSITE" id="PS00112">
    <property type="entry name" value="PHOSPHAGEN_KINASE"/>
    <property type="match status" value="1"/>
</dbReference>
<dbReference type="PROSITE" id="PS51510">
    <property type="entry name" value="PHOSPHAGEN_KINASE_C"/>
    <property type="match status" value="1"/>
</dbReference>
<protein>
    <recommendedName>
        <fullName evidence="1">Protein-arginine kinase</fullName>
        <ecNumber evidence="1">2.7.14.1</ecNumber>
    </recommendedName>
</protein>
<comment type="function">
    <text evidence="1">Catalyzes the specific phosphorylation of arginine residues in proteins.</text>
</comment>
<comment type="catalytic activity">
    <reaction evidence="1">
        <text>L-arginyl-[protein] + ATP = N(omega)-phospho-L-arginyl-[protein] + ADP + H(+)</text>
        <dbReference type="Rhea" id="RHEA:43384"/>
        <dbReference type="Rhea" id="RHEA-COMP:10532"/>
        <dbReference type="Rhea" id="RHEA-COMP:10533"/>
        <dbReference type="ChEBI" id="CHEBI:15378"/>
        <dbReference type="ChEBI" id="CHEBI:29965"/>
        <dbReference type="ChEBI" id="CHEBI:30616"/>
        <dbReference type="ChEBI" id="CHEBI:83226"/>
        <dbReference type="ChEBI" id="CHEBI:456216"/>
        <dbReference type="EC" id="2.7.14.1"/>
    </reaction>
</comment>
<comment type="activity regulation">
    <text evidence="1">Appears to be allosterically activated by the binding of pArg-containing polypeptides to the pArg-binding pocket localized in the C-terminal domain of McsB.</text>
</comment>
<comment type="similarity">
    <text evidence="1">Belongs to the ATP:guanido phosphotransferase family.</text>
</comment>
<accession>Q8R7S0</accession>
<gene>
    <name evidence="1" type="primary">mcsB</name>
    <name type="ordered locus">TTE2328</name>
</gene>
<sequence>MLQYDKDVVLSSRIRLARNVKDIPFPTVMTEEQGKKVIELARKAILGSNTILSTQFTEYEMKKLTPLDRQALVEKHLISPDLSQNIKTGYALIKDDNTVSIMVNEEDHLRIQCILPGLKLDESWDMADKIDDLIEETIDYAYDEKIGYLTSCPTNVGTGIRASVMVHLPALTITGQISNILNSVSKIGMAVRGIYGEGTQALGDIYQISNQVTLGQSEKEIIENIEGVAKQIISSERRAREELYKKQRVQIEDRVGRAFGILSHAKVMSTKEYMTLMSDVRLGIVLGILSVDLDKLDRLTTQIQPANLQKIYGMQLNPYERDVKRAEYVSTQLNKKE</sequence>
<organism>
    <name type="scientific">Caldanaerobacter subterraneus subsp. tengcongensis (strain DSM 15242 / JCM 11007 / NBRC 100824 / MB4)</name>
    <name type="common">Thermoanaerobacter tengcongensis</name>
    <dbReference type="NCBI Taxonomy" id="273068"/>
    <lineage>
        <taxon>Bacteria</taxon>
        <taxon>Bacillati</taxon>
        <taxon>Bacillota</taxon>
        <taxon>Clostridia</taxon>
        <taxon>Thermoanaerobacterales</taxon>
        <taxon>Thermoanaerobacteraceae</taxon>
        <taxon>Caldanaerobacter</taxon>
    </lineage>
</organism>
<proteinExistence type="inferred from homology"/>
<keyword id="KW-0021">Allosteric enzyme</keyword>
<keyword id="KW-0067">ATP-binding</keyword>
<keyword id="KW-0418">Kinase</keyword>
<keyword id="KW-0547">Nucleotide-binding</keyword>
<keyword id="KW-1185">Reference proteome</keyword>
<keyword id="KW-0808">Transferase</keyword>